<sequence length="775" mass="86489">MSVEEKARIGNSEEPIIIETGKYAKLTDGSVVVRQGGTAVLVTAVMSDEPITDVDFTPLAVDYRERASAYGRIPGGFTKREGKPTDREILVSRVIDRPIRPLFPEGFFHDVIITALTLSADDKYDPDVLAITGASAALHISRIPFEGPIAGVRVCRVNGEFVANPTYEQRKEADLDIVMAGTKDAIVMVEGGGKEIPEEVLADALFFGLDAIKEVIEAQERLREKVGKPKFEYQKVELPEDILKALEEECTPKILEAFNIKDKKERYSTLDKIVEEFIEAHQIPEELHFAVKYFYKKLESRLMREKVLKEGVRIDGRKPNEIRPIWIEVHPFERPHGNAIFTRGQTQAYVTVTLGTPDEALIIETIAEGEVFKRFMLHYSMPPFSVGEAKPWGPPRRREIGHGALAERAIEPLLPPEEEYPFIIRVVSDILESNGSTSMATVCGASLALFDAGVPMKDNKHVAGIAMGLILEKDRYVILSDILGDEDHLGDMDFKVAGTKDGITSVQMDIKVKGITKEIMLDALKQAREGRLYILEKMYEAIPEPRKEPHPYTPKVEVVDVPEEKAPLIIGPGGSTVKKIYDETGVKVWVGEQGKVYLFVFPGGDVEKAKQMIQDIVREVEVGAVYKGTITRVEPYGVFVELWPGKIGLLHVSKMAEPVRSATEKYKVGEEIIVKVLDLDELGRPRFTTIGIEDVGTEKKEVKPKVGDVYEGKVVRVEPYGAFIEYAPGKVGLLHVSKMKERVKDARQKYKVGDVVKVKVVEIDEQGRPKFTDDV</sequence>
<keyword id="KW-0963">Cytoplasm</keyword>
<keyword id="KW-0460">Magnesium</keyword>
<keyword id="KW-0479">Metal-binding</keyword>
<keyword id="KW-0548">Nucleotidyltransferase</keyword>
<keyword id="KW-1185">Reference proteome</keyword>
<keyword id="KW-0677">Repeat</keyword>
<keyword id="KW-0694">RNA-binding</keyword>
<keyword id="KW-0808">Transferase</keyword>
<evidence type="ECO:0000255" key="1">
    <source>
        <dbReference type="HAMAP-Rule" id="MF_01595"/>
    </source>
</evidence>
<comment type="function">
    <text evidence="1">Involved in mRNA degradation. Catalyzes the phosphorolysis of single-stranded polyribonucleotides processively in the 3'- to 5'-direction.</text>
</comment>
<comment type="catalytic activity">
    <reaction evidence="1">
        <text>RNA(n+1) + phosphate = RNA(n) + a ribonucleoside 5'-diphosphate</text>
        <dbReference type="Rhea" id="RHEA:22096"/>
        <dbReference type="Rhea" id="RHEA-COMP:14527"/>
        <dbReference type="Rhea" id="RHEA-COMP:17342"/>
        <dbReference type="ChEBI" id="CHEBI:43474"/>
        <dbReference type="ChEBI" id="CHEBI:57930"/>
        <dbReference type="ChEBI" id="CHEBI:140395"/>
        <dbReference type="EC" id="2.7.7.8"/>
    </reaction>
</comment>
<comment type="cofactor">
    <cofactor evidence="1">
        <name>Mg(2+)</name>
        <dbReference type="ChEBI" id="CHEBI:18420"/>
    </cofactor>
</comment>
<comment type="subcellular location">
    <subcellularLocation>
        <location evidence="1">Cytoplasm</location>
    </subcellularLocation>
</comment>
<comment type="similarity">
    <text evidence="1">Belongs to the polyribonucleotide nucleotidyltransferase family.</text>
</comment>
<name>PNP_AQUAE</name>
<proteinExistence type="inferred from homology"/>
<reference key="1">
    <citation type="journal article" date="1998" name="Nature">
        <title>The complete genome of the hyperthermophilic bacterium Aquifex aeolicus.</title>
        <authorList>
            <person name="Deckert G."/>
            <person name="Warren P.V."/>
            <person name="Gaasterland T."/>
            <person name="Young W.G."/>
            <person name="Lenox A.L."/>
            <person name="Graham D.E."/>
            <person name="Overbeek R."/>
            <person name="Snead M.A."/>
            <person name="Keller M."/>
            <person name="Aujay M."/>
            <person name="Huber R."/>
            <person name="Feldman R.A."/>
            <person name="Short J.M."/>
            <person name="Olsen G.J."/>
            <person name="Swanson R.V."/>
        </authorList>
    </citation>
    <scope>NUCLEOTIDE SEQUENCE [LARGE SCALE GENOMIC DNA]</scope>
    <source>
        <strain>VF5</strain>
    </source>
</reference>
<organism>
    <name type="scientific">Aquifex aeolicus (strain VF5)</name>
    <dbReference type="NCBI Taxonomy" id="224324"/>
    <lineage>
        <taxon>Bacteria</taxon>
        <taxon>Pseudomonadati</taxon>
        <taxon>Aquificota</taxon>
        <taxon>Aquificia</taxon>
        <taxon>Aquificales</taxon>
        <taxon>Aquificaceae</taxon>
        <taxon>Aquifex</taxon>
    </lineage>
</organism>
<gene>
    <name evidence="1" type="primary">pnp</name>
    <name type="ordered locus">aq_221</name>
</gene>
<feature type="chain" id="PRO_0000329502" description="Polyribonucleotide nucleotidyltransferase">
    <location>
        <begin position="1"/>
        <end position="775"/>
    </location>
</feature>
<feature type="domain" description="KH" evidence="1">
    <location>
        <begin position="554"/>
        <end position="613"/>
    </location>
</feature>
<feature type="domain" description="S1 motif 1" evidence="1">
    <location>
        <begin position="623"/>
        <end position="693"/>
    </location>
</feature>
<feature type="domain" description="S1 motif 2" evidence="1">
    <location>
        <begin position="707"/>
        <end position="775"/>
    </location>
</feature>
<feature type="binding site" evidence="1">
    <location>
        <position position="487"/>
    </location>
    <ligand>
        <name>Mg(2+)</name>
        <dbReference type="ChEBI" id="CHEBI:18420"/>
    </ligand>
</feature>
<feature type="binding site" evidence="1">
    <location>
        <position position="493"/>
    </location>
    <ligand>
        <name>Mg(2+)</name>
        <dbReference type="ChEBI" id="CHEBI:18420"/>
    </ligand>
</feature>
<protein>
    <recommendedName>
        <fullName evidence="1">Polyribonucleotide nucleotidyltransferase</fullName>
        <ecNumber evidence="1">2.7.7.8</ecNumber>
    </recommendedName>
    <alternativeName>
        <fullName evidence="1">Polynucleotide phosphorylase</fullName>
        <shortName evidence="1">PNPase</shortName>
    </alternativeName>
</protein>
<dbReference type="EC" id="2.7.7.8" evidence="1"/>
<dbReference type="EMBL" id="AE000657">
    <property type="protein sequence ID" value="AAC06562.1"/>
    <property type="molecule type" value="Genomic_DNA"/>
</dbReference>
<dbReference type="PIR" id="E70320">
    <property type="entry name" value="E70320"/>
</dbReference>
<dbReference type="RefSeq" id="NP_213153.1">
    <property type="nucleotide sequence ID" value="NC_000918.1"/>
</dbReference>
<dbReference type="RefSeq" id="WP_010880091.1">
    <property type="nucleotide sequence ID" value="NC_000918.1"/>
</dbReference>
<dbReference type="SMR" id="O66593"/>
<dbReference type="FunCoup" id="O66593">
    <property type="interactions" value="443"/>
</dbReference>
<dbReference type="STRING" id="224324.aq_221"/>
<dbReference type="EnsemblBacteria" id="AAC06562">
    <property type="protein sequence ID" value="AAC06562"/>
    <property type="gene ID" value="aq_221"/>
</dbReference>
<dbReference type="KEGG" id="aae:aq_221"/>
<dbReference type="PATRIC" id="fig|224324.8.peg.184"/>
<dbReference type="eggNOG" id="COG1185">
    <property type="taxonomic scope" value="Bacteria"/>
</dbReference>
<dbReference type="HOGENOM" id="CLU_004217_2_2_0"/>
<dbReference type="InParanoid" id="O66593"/>
<dbReference type="OrthoDB" id="9804305at2"/>
<dbReference type="Proteomes" id="UP000000798">
    <property type="component" value="Chromosome"/>
</dbReference>
<dbReference type="GO" id="GO:0005829">
    <property type="term" value="C:cytosol"/>
    <property type="evidence" value="ECO:0000318"/>
    <property type="project" value="GO_Central"/>
</dbReference>
<dbReference type="GO" id="GO:0000175">
    <property type="term" value="F:3'-5'-RNA exonuclease activity"/>
    <property type="evidence" value="ECO:0000318"/>
    <property type="project" value="GO_Central"/>
</dbReference>
<dbReference type="GO" id="GO:0000287">
    <property type="term" value="F:magnesium ion binding"/>
    <property type="evidence" value="ECO:0007669"/>
    <property type="project" value="UniProtKB-UniRule"/>
</dbReference>
<dbReference type="GO" id="GO:0004654">
    <property type="term" value="F:polyribonucleotide nucleotidyltransferase activity"/>
    <property type="evidence" value="ECO:0000318"/>
    <property type="project" value="GO_Central"/>
</dbReference>
<dbReference type="GO" id="GO:0003723">
    <property type="term" value="F:RNA binding"/>
    <property type="evidence" value="ECO:0007669"/>
    <property type="project" value="UniProtKB-UniRule"/>
</dbReference>
<dbReference type="GO" id="GO:0006402">
    <property type="term" value="P:mRNA catabolic process"/>
    <property type="evidence" value="ECO:0007669"/>
    <property type="project" value="UniProtKB-UniRule"/>
</dbReference>
<dbReference type="GO" id="GO:0006401">
    <property type="term" value="P:RNA catabolic process"/>
    <property type="evidence" value="ECO:0000318"/>
    <property type="project" value="GO_Central"/>
</dbReference>
<dbReference type="GO" id="GO:0006396">
    <property type="term" value="P:RNA processing"/>
    <property type="evidence" value="ECO:0007669"/>
    <property type="project" value="InterPro"/>
</dbReference>
<dbReference type="CDD" id="cd02393">
    <property type="entry name" value="KH-I_PNPase"/>
    <property type="match status" value="1"/>
</dbReference>
<dbReference type="CDD" id="cd11363">
    <property type="entry name" value="RNase_PH_PNPase_1"/>
    <property type="match status" value="1"/>
</dbReference>
<dbReference type="CDD" id="cd11364">
    <property type="entry name" value="RNase_PH_PNPase_2"/>
    <property type="match status" value="1"/>
</dbReference>
<dbReference type="FunFam" id="3.30.230.70:FF:000001">
    <property type="entry name" value="Polyribonucleotide nucleotidyltransferase"/>
    <property type="match status" value="1"/>
</dbReference>
<dbReference type="FunFam" id="3.30.1370.10:FF:000044">
    <property type="entry name" value="Polyribonucleotide nucleotidyltransferase 1, mitochondrial"/>
    <property type="match status" value="1"/>
</dbReference>
<dbReference type="FunFam" id="3.30.230.70:FF:000020">
    <property type="entry name" value="Polyribonucleotide nucleotidyltransferase 2 mitochondrial"/>
    <property type="match status" value="1"/>
</dbReference>
<dbReference type="FunFam" id="2.40.50.140:FF:000189">
    <property type="entry name" value="Polyribonucleotide nucleotidyltransferase, putative"/>
    <property type="match status" value="1"/>
</dbReference>
<dbReference type="Gene3D" id="3.30.230.70">
    <property type="entry name" value="GHMP Kinase, N-terminal domain"/>
    <property type="match status" value="2"/>
</dbReference>
<dbReference type="Gene3D" id="3.30.1370.10">
    <property type="entry name" value="K Homology domain, type 1"/>
    <property type="match status" value="1"/>
</dbReference>
<dbReference type="Gene3D" id="2.40.50.140">
    <property type="entry name" value="Nucleic acid-binding proteins"/>
    <property type="match status" value="2"/>
</dbReference>
<dbReference type="HAMAP" id="MF_01595">
    <property type="entry name" value="PNPase"/>
    <property type="match status" value="1"/>
</dbReference>
<dbReference type="InterPro" id="IPR001247">
    <property type="entry name" value="ExoRNase_PH_dom1"/>
</dbReference>
<dbReference type="InterPro" id="IPR015847">
    <property type="entry name" value="ExoRNase_PH_dom2"/>
</dbReference>
<dbReference type="InterPro" id="IPR036345">
    <property type="entry name" value="ExoRNase_PH_dom2_sf"/>
</dbReference>
<dbReference type="InterPro" id="IPR004087">
    <property type="entry name" value="KH_dom"/>
</dbReference>
<dbReference type="InterPro" id="IPR004088">
    <property type="entry name" value="KH_dom_type_1"/>
</dbReference>
<dbReference type="InterPro" id="IPR036612">
    <property type="entry name" value="KH_dom_type_1_sf"/>
</dbReference>
<dbReference type="InterPro" id="IPR012340">
    <property type="entry name" value="NA-bd_OB-fold"/>
</dbReference>
<dbReference type="InterPro" id="IPR012162">
    <property type="entry name" value="PNPase"/>
</dbReference>
<dbReference type="InterPro" id="IPR027408">
    <property type="entry name" value="PNPase/RNase_PH_dom_sf"/>
</dbReference>
<dbReference type="InterPro" id="IPR015848">
    <property type="entry name" value="PNPase_PH_RNA-bd_bac/org-type"/>
</dbReference>
<dbReference type="InterPro" id="IPR036456">
    <property type="entry name" value="PNPase_PH_RNA-bd_sf"/>
</dbReference>
<dbReference type="InterPro" id="IPR020568">
    <property type="entry name" value="Ribosomal_Su5_D2-typ_SF"/>
</dbReference>
<dbReference type="InterPro" id="IPR003029">
    <property type="entry name" value="S1_domain"/>
</dbReference>
<dbReference type="NCBIfam" id="TIGR03591">
    <property type="entry name" value="polynuc_phos"/>
    <property type="match status" value="1"/>
</dbReference>
<dbReference type="NCBIfam" id="NF008805">
    <property type="entry name" value="PRK11824.1"/>
    <property type="match status" value="1"/>
</dbReference>
<dbReference type="PANTHER" id="PTHR11252">
    <property type="entry name" value="POLYRIBONUCLEOTIDE NUCLEOTIDYLTRANSFERASE"/>
    <property type="match status" value="1"/>
</dbReference>
<dbReference type="PANTHER" id="PTHR11252:SF0">
    <property type="entry name" value="POLYRIBONUCLEOTIDE NUCLEOTIDYLTRANSFERASE 1, MITOCHONDRIAL"/>
    <property type="match status" value="1"/>
</dbReference>
<dbReference type="Pfam" id="PF00013">
    <property type="entry name" value="KH_1"/>
    <property type="match status" value="1"/>
</dbReference>
<dbReference type="Pfam" id="PF03726">
    <property type="entry name" value="PNPase"/>
    <property type="match status" value="1"/>
</dbReference>
<dbReference type="Pfam" id="PF01138">
    <property type="entry name" value="RNase_PH"/>
    <property type="match status" value="2"/>
</dbReference>
<dbReference type="Pfam" id="PF03725">
    <property type="entry name" value="RNase_PH_C"/>
    <property type="match status" value="2"/>
</dbReference>
<dbReference type="Pfam" id="PF00575">
    <property type="entry name" value="S1"/>
    <property type="match status" value="2"/>
</dbReference>
<dbReference type="PIRSF" id="PIRSF005499">
    <property type="entry name" value="PNPase"/>
    <property type="match status" value="1"/>
</dbReference>
<dbReference type="SMART" id="SM00322">
    <property type="entry name" value="KH"/>
    <property type="match status" value="1"/>
</dbReference>
<dbReference type="SMART" id="SM00316">
    <property type="entry name" value="S1"/>
    <property type="match status" value="2"/>
</dbReference>
<dbReference type="SUPFAM" id="SSF54791">
    <property type="entry name" value="Eukaryotic type KH-domain (KH-domain type I)"/>
    <property type="match status" value="1"/>
</dbReference>
<dbReference type="SUPFAM" id="SSF50249">
    <property type="entry name" value="Nucleic acid-binding proteins"/>
    <property type="match status" value="2"/>
</dbReference>
<dbReference type="SUPFAM" id="SSF46915">
    <property type="entry name" value="Polynucleotide phosphorylase/guanosine pentaphosphate synthase (PNPase/GPSI), domain 3"/>
    <property type="match status" value="1"/>
</dbReference>
<dbReference type="SUPFAM" id="SSF55666">
    <property type="entry name" value="Ribonuclease PH domain 2-like"/>
    <property type="match status" value="2"/>
</dbReference>
<dbReference type="SUPFAM" id="SSF54211">
    <property type="entry name" value="Ribosomal protein S5 domain 2-like"/>
    <property type="match status" value="2"/>
</dbReference>
<dbReference type="PROSITE" id="PS50084">
    <property type="entry name" value="KH_TYPE_1"/>
    <property type="match status" value="1"/>
</dbReference>
<dbReference type="PROSITE" id="PS50126">
    <property type="entry name" value="S1"/>
    <property type="match status" value="2"/>
</dbReference>
<accession>O66593</accession>